<accession>Q59YH3</accession>
<accession>A0A1D8PN87</accession>
<evidence type="ECO:0000256" key="1">
    <source>
        <dbReference type="SAM" id="MobiDB-lite"/>
    </source>
</evidence>
<evidence type="ECO:0000269" key="2">
    <source>
    </source>
</evidence>
<evidence type="ECO:0000269" key="3">
    <source>
    </source>
</evidence>
<evidence type="ECO:0000269" key="4">
    <source>
    </source>
</evidence>
<evidence type="ECO:0000269" key="5">
    <source>
    </source>
</evidence>
<evidence type="ECO:0000269" key="6">
    <source>
    </source>
</evidence>
<evidence type="ECO:0000269" key="7">
    <source>
    </source>
</evidence>
<evidence type="ECO:0000269" key="8">
    <source>
    </source>
</evidence>
<evidence type="ECO:0000305" key="9"/>
<organism>
    <name type="scientific">Candida albicans (strain SC5314 / ATCC MYA-2876)</name>
    <name type="common">Yeast</name>
    <dbReference type="NCBI Taxonomy" id="237561"/>
    <lineage>
        <taxon>Eukaryota</taxon>
        <taxon>Fungi</taxon>
        <taxon>Dikarya</taxon>
        <taxon>Ascomycota</taxon>
        <taxon>Saccharomycotina</taxon>
        <taxon>Pichiomycetes</taxon>
        <taxon>Debaryomycetaceae</taxon>
        <taxon>Candida/Lodderomyces clade</taxon>
        <taxon>Candida</taxon>
    </lineage>
</organism>
<reference key="1">
    <citation type="journal article" date="2004" name="Proc. Natl. Acad. Sci. U.S.A.">
        <title>The diploid genome sequence of Candida albicans.</title>
        <authorList>
            <person name="Jones T."/>
            <person name="Federspiel N.A."/>
            <person name="Chibana H."/>
            <person name="Dungan J."/>
            <person name="Kalman S."/>
            <person name="Magee B.B."/>
            <person name="Newport G."/>
            <person name="Thorstenson Y.R."/>
            <person name="Agabian N."/>
            <person name="Magee P.T."/>
            <person name="Davis R.W."/>
            <person name="Scherer S."/>
        </authorList>
    </citation>
    <scope>NUCLEOTIDE SEQUENCE [LARGE SCALE GENOMIC DNA]</scope>
    <source>
        <strain>SC5314 / ATCC MYA-2876</strain>
    </source>
</reference>
<reference key="2">
    <citation type="journal article" date="2007" name="Genome Biol.">
        <title>Assembly of the Candida albicans genome into sixteen supercontigs aligned on the eight chromosomes.</title>
        <authorList>
            <person name="van het Hoog M."/>
            <person name="Rast T.J."/>
            <person name="Martchenko M."/>
            <person name="Grindle S."/>
            <person name="Dignard D."/>
            <person name="Hogues H."/>
            <person name="Cuomo C."/>
            <person name="Berriman M."/>
            <person name="Scherer S."/>
            <person name="Magee B.B."/>
            <person name="Whiteway M."/>
            <person name="Chibana H."/>
            <person name="Nantel A."/>
            <person name="Magee P.T."/>
        </authorList>
    </citation>
    <scope>GENOME REANNOTATION</scope>
    <source>
        <strain>SC5314 / ATCC MYA-2876</strain>
    </source>
</reference>
<reference key="3">
    <citation type="journal article" date="2013" name="Genome Biol.">
        <title>Assembly of a phased diploid Candida albicans genome facilitates allele-specific measurements and provides a simple model for repeat and indel structure.</title>
        <authorList>
            <person name="Muzzey D."/>
            <person name="Schwartz K."/>
            <person name="Weissman J.S."/>
            <person name="Sherlock G."/>
        </authorList>
    </citation>
    <scope>NUCLEOTIDE SEQUENCE [LARGE SCALE GENOMIC DNA]</scope>
    <scope>GENOME REANNOTATION</scope>
    <source>
        <strain>SC5314 / ATCC MYA-2876</strain>
    </source>
</reference>
<reference key="4">
    <citation type="journal article" date="1994" name="Mol. Gen. Genet.">
        <title>Molecular cloning and analysis of CDC28 and cyclin homologues from the human fungal pathogen Candida albicans.</title>
        <authorList>
            <person name="Sherlock G."/>
            <person name="Bahman A.M."/>
            <person name="Mahal A."/>
            <person name="Shieh J.C."/>
            <person name="Ferreira M."/>
            <person name="Rosamond J."/>
        </authorList>
    </citation>
    <scope>IDENTIFICATION</scope>
</reference>
<reference key="5">
    <citation type="journal article" date="1999" name="Mol. Cell. Biol.">
        <title>A G1 cyclin is necessary for maintenance of filamentous growth in Candida albicans.</title>
        <authorList>
            <person name="Loeb J.D."/>
            <person name="Sepulveda-Becerra M."/>
            <person name="Hazan I."/>
            <person name="Liu H."/>
        </authorList>
    </citation>
    <scope>FUNCTION</scope>
</reference>
<reference key="6">
    <citation type="journal article" date="2005" name="Mol. Biol. Cell">
        <title>The mitotic cyclins Clb2p and Clb4p affect morphogenesis in Candida albicans.</title>
        <authorList>
            <person name="Bensen E.S."/>
            <person name="Clemente-Blanco A."/>
            <person name="Finley K.R."/>
            <person name="Correa-Bordes J."/>
            <person name="Berman J."/>
        </authorList>
    </citation>
    <scope>INDUCTION</scope>
</reference>
<reference key="7">
    <citation type="journal article" date="2007" name="Dev. Cell">
        <title>Cyclin-dependent kinases control septin phosphorylation in Candida albicans hyphal development.</title>
        <authorList>
            <person name="Sinha I."/>
            <person name="Wang Y.M."/>
            <person name="Philp R."/>
            <person name="Li C.R."/>
            <person name="Yap W.H."/>
            <person name="Wang Y."/>
        </authorList>
    </citation>
    <scope>INTERACTION WITH CDC28</scope>
    <scope>FUNCTION</scope>
</reference>
<reference key="8">
    <citation type="journal article" date="2007" name="Mol. Cell. Biochem.">
        <title>cAMP regulates vegetative growth and cell cycle in Candida albicans.</title>
        <authorList>
            <person name="Singh A."/>
            <person name="Sharma S."/>
            <person name="Khuller G.K."/>
        </authorList>
    </citation>
    <scope>INDUCTION</scope>
</reference>
<reference key="9">
    <citation type="journal article" date="2009" name="Mol. Cell. Biol.">
        <title>Hyphal chain formation in Candida albicans: Cdc28-Hgc1 phosphorylation of Efg1 represses cell separation genes.</title>
        <authorList>
            <person name="Wang A."/>
            <person name="Raniga P.P."/>
            <person name="Lane S."/>
            <person name="Lu Y."/>
            <person name="Liu H."/>
        </authorList>
    </citation>
    <scope>INDUCTION</scope>
</reference>
<reference key="10">
    <citation type="journal article" date="2010" name="EMBO J.">
        <title>Hyphal growth in Candida albicans requires the phosphorylation of Sec2 by the Cdc28-Ccn1/Hgc1 kinase.</title>
        <authorList>
            <person name="Bishop A."/>
            <person name="Lane R."/>
            <person name="Beniston R."/>
            <person name="Chapa-y-Lazo B."/>
            <person name="Smythe C."/>
            <person name="Sudbery P."/>
        </authorList>
    </citation>
    <scope>FUNCTION OF THE CDC28-CCN1 COMPLEX</scope>
</reference>
<reference key="11">
    <citation type="journal article" date="2012" name="PLoS ONE">
        <title>A versatile overexpression strategy in the pathogenic yeast Candida albicans: identification of regulators of morphogenesis and fitness.</title>
        <authorList>
            <person name="Chauvel M."/>
            <person name="Nesseir A."/>
            <person name="Cabral V."/>
            <person name="Znaidi S."/>
            <person name="Goyard S."/>
            <person name="Bachellier-Bassi S."/>
            <person name="Firon A."/>
            <person name="Legrand M."/>
            <person name="Diogo D."/>
            <person name="Naulleau C."/>
            <person name="Rossignol T."/>
            <person name="d'Enfert C."/>
        </authorList>
    </citation>
    <scope>FUNCTION</scope>
</reference>
<gene>
    <name type="primary">CCN1</name>
    <name type="synonym">CLN1</name>
    <name type="ordered locus">CAALFM_C501680CA</name>
    <name type="ORF">CaO19.10719</name>
    <name type="ORF">CaO19.3207</name>
</gene>
<name>CG11_CANAL</name>
<sequence length="693" mass="78370">MTSLQQQRVKYGPPHHIKRRPYHPILESLEFQTNQHLIQEYSLDIVNTLSQLESLTLVNPAMIDLQPEIQWFMRPFLLDFLIELHSSFKLQPTTLFLCLNIIDRYCAKRIVFKRHYQLVGCTALWIASKYEDKKSRVPTLKELTIMCRNAYDEEMFVQMEMHILSTLDWSIGHPTLEDCLQLAIDSNNLSNNTTNDIENKSVRPNRKSSISSAVTAVARFLCELSLYDKYFLSVPPSLIAITANLLSCSMLQIPHASITLKNLIEQEIINPQQKKQKKALSSNSSRTTTASYTHQNQSDVRHSSFDEDIDLDSGDEEDDDEDYIDEFYETNNYDDTNATTFDESISKSTTVNDENQPPQIHTPFLSGLDEDSILSIKKICLMLIIQLSKVTEVLSKKYENLGVIQVINNFHSNYKFIIQSIYENQELLLNTINDSTNNNEIDYKLIQSSEILLQFPKFDEYLTEDEDENVSTDDEANSQPQGYDGSGSDGNNQLFTPKSPNAFSSNSSLTLNNHPQSMVPVTPPSATSQYSLFSNKNNRTHESTSGLNSTCNTPTHISISSFAPPQPPPGSILKPKLTSINSTNSLKIKKLTSNSNSSNINIHHGHHNTKQEKRYSHISIGSNSSSKYDGFSPIKSISTNGSLITNNGSLITNNGSFTNIVNNTNSSSPLMNQQQQQQVTQSSLYQHHHQYHQ</sequence>
<keyword id="KW-0131">Cell cycle</keyword>
<keyword id="KW-0132">Cell division</keyword>
<keyword id="KW-0195">Cyclin</keyword>
<keyword id="KW-0498">Mitosis</keyword>
<keyword id="KW-1185">Reference proteome</keyword>
<comment type="function">
    <text evidence="2 5 7 8">G1/S-specific cyclin essential for the control of the cell cycle at the G1/S (start) transition and for maintenance of filamentous growth. Through binding to CDC28 controls the phosphorylation of CDC11 and SEC2 upon induction of filamentous growth.</text>
</comment>
<comment type="subunit">
    <text evidence="5">Interacts with CDC28. The CDC28-CCN1 complex associates with septin CDC11 upon hyphal induction.</text>
</comment>
<comment type="induction">
    <text evidence="3 4 6">Expression peaks at G1/S. CCN1 is stabilized during germ tube formation.</text>
</comment>
<comment type="similarity">
    <text evidence="9">Belongs to the cyclin family.</text>
</comment>
<protein>
    <recommendedName>
        <fullName>G1/S-specific cyclin CCN1</fullName>
    </recommendedName>
</protein>
<dbReference type="EMBL" id="CP017627">
    <property type="protein sequence ID" value="AOW29599.1"/>
    <property type="molecule type" value="Genomic_DNA"/>
</dbReference>
<dbReference type="RefSeq" id="XP_714623.2">
    <property type="nucleotide sequence ID" value="XM_709530.2"/>
</dbReference>
<dbReference type="SMR" id="Q59YH3"/>
<dbReference type="BioGRID" id="1226721">
    <property type="interactions" value="2"/>
</dbReference>
<dbReference type="STRING" id="237561.Q59YH3"/>
<dbReference type="EnsemblFungi" id="C5_01680C_A-T">
    <property type="protein sequence ID" value="C5_01680C_A-T-p1"/>
    <property type="gene ID" value="C5_01680C_A"/>
</dbReference>
<dbReference type="GeneID" id="3643735"/>
<dbReference type="KEGG" id="cal:CAALFM_C501680CA"/>
<dbReference type="CGD" id="CAL0000199358">
    <property type="gene designation" value="CCN1"/>
</dbReference>
<dbReference type="VEuPathDB" id="FungiDB:C5_01680C_A"/>
<dbReference type="eggNOG" id="KOG0653">
    <property type="taxonomic scope" value="Eukaryota"/>
</dbReference>
<dbReference type="HOGENOM" id="CLU_029626_0_0_1"/>
<dbReference type="InParanoid" id="Q59YH3"/>
<dbReference type="OrthoDB" id="5590282at2759"/>
<dbReference type="PRO" id="PR:Q59YH3"/>
<dbReference type="Proteomes" id="UP000000559">
    <property type="component" value="Chromosome 5"/>
</dbReference>
<dbReference type="GO" id="GO:0000307">
    <property type="term" value="C:cyclin-dependent protein kinase holoenzyme complex"/>
    <property type="evidence" value="ECO:0000318"/>
    <property type="project" value="GO_Central"/>
</dbReference>
<dbReference type="GO" id="GO:0005737">
    <property type="term" value="C:cytoplasm"/>
    <property type="evidence" value="ECO:0000318"/>
    <property type="project" value="GO_Central"/>
</dbReference>
<dbReference type="GO" id="GO:0005634">
    <property type="term" value="C:nucleus"/>
    <property type="evidence" value="ECO:0000318"/>
    <property type="project" value="GO_Central"/>
</dbReference>
<dbReference type="GO" id="GO:0016538">
    <property type="term" value="F:cyclin-dependent protein serine/threonine kinase regulator activity"/>
    <property type="evidence" value="ECO:0000316"/>
    <property type="project" value="CGD"/>
</dbReference>
<dbReference type="GO" id="GO:0004672">
    <property type="term" value="F:protein kinase activity"/>
    <property type="evidence" value="ECO:0000315"/>
    <property type="project" value="CGD"/>
</dbReference>
<dbReference type="GO" id="GO:0051301">
    <property type="term" value="P:cell division"/>
    <property type="evidence" value="ECO:0007669"/>
    <property type="project" value="UniProtKB-KW"/>
</dbReference>
<dbReference type="GO" id="GO:0036244">
    <property type="term" value="P:cellular response to neutral pH"/>
    <property type="evidence" value="ECO:0000315"/>
    <property type="project" value="CGD"/>
</dbReference>
<dbReference type="GO" id="GO:0030447">
    <property type="term" value="P:filamentous growth"/>
    <property type="evidence" value="ECO:0000315"/>
    <property type="project" value="CGD"/>
</dbReference>
<dbReference type="GO" id="GO:0036180">
    <property type="term" value="P:filamentous growth of a population of unicellular organisms in response to biotic stimulus"/>
    <property type="evidence" value="ECO:0000315"/>
    <property type="project" value="CGD"/>
</dbReference>
<dbReference type="GO" id="GO:0036178">
    <property type="term" value="P:filamentous growth of a population of unicellular organisms in response to neutral pH"/>
    <property type="evidence" value="ECO:0000315"/>
    <property type="project" value="CGD"/>
</dbReference>
<dbReference type="GO" id="GO:0000082">
    <property type="term" value="P:G1/S transition of mitotic cell cycle"/>
    <property type="evidence" value="ECO:0000315"/>
    <property type="project" value="CGD"/>
</dbReference>
<dbReference type="GO" id="GO:0030448">
    <property type="term" value="P:hyphal growth"/>
    <property type="evidence" value="ECO:0000315"/>
    <property type="project" value="CGD"/>
</dbReference>
<dbReference type="GO" id="GO:0030011">
    <property type="term" value="P:maintenance of cell polarity"/>
    <property type="evidence" value="ECO:0000315"/>
    <property type="project" value="CGD"/>
</dbReference>
<dbReference type="GO" id="GO:0060258">
    <property type="term" value="P:negative regulation of filamentous growth"/>
    <property type="evidence" value="ECO:0000315"/>
    <property type="project" value="CGD"/>
</dbReference>
<dbReference type="GO" id="GO:1900445">
    <property type="term" value="P:positive regulation of filamentous growth of a population of unicellular organisms in response to biotic stimulus"/>
    <property type="evidence" value="ECO:0000315"/>
    <property type="project" value="CGD"/>
</dbReference>
<dbReference type="GO" id="GO:1900442">
    <property type="term" value="P:positive regulation of filamentous growth of a population of unicellular organisms in response to neutral pH"/>
    <property type="evidence" value="ECO:0000315"/>
    <property type="project" value="CGD"/>
</dbReference>
<dbReference type="GO" id="GO:0051726">
    <property type="term" value="P:regulation of cell cycle"/>
    <property type="evidence" value="ECO:0000315"/>
    <property type="project" value="CGD"/>
</dbReference>
<dbReference type="GO" id="GO:2000045">
    <property type="term" value="P:regulation of G1/S transition of mitotic cell cycle"/>
    <property type="evidence" value="ECO:0007669"/>
    <property type="project" value="InterPro"/>
</dbReference>
<dbReference type="GO" id="GO:0044010">
    <property type="term" value="P:single-species biofilm formation"/>
    <property type="evidence" value="ECO:0000316"/>
    <property type="project" value="CGD"/>
</dbReference>
<dbReference type="CDD" id="cd20537">
    <property type="entry name" value="CYCLIN_CCNO-like_rpt2"/>
    <property type="match status" value="1"/>
</dbReference>
<dbReference type="CDD" id="cd20559">
    <property type="entry name" value="CYCLIN_ScCLN_like"/>
    <property type="match status" value="1"/>
</dbReference>
<dbReference type="FunFam" id="1.10.472.10:FF:000010">
    <property type="entry name" value="G1/S-specific cyclin Cln1"/>
    <property type="match status" value="1"/>
</dbReference>
<dbReference type="Gene3D" id="1.10.472.10">
    <property type="entry name" value="Cyclin-like"/>
    <property type="match status" value="2"/>
</dbReference>
<dbReference type="InterPro" id="IPR039361">
    <property type="entry name" value="Cyclin"/>
</dbReference>
<dbReference type="InterPro" id="IPR013763">
    <property type="entry name" value="Cyclin-like_dom"/>
</dbReference>
<dbReference type="InterPro" id="IPR036915">
    <property type="entry name" value="Cyclin-like_sf"/>
</dbReference>
<dbReference type="InterPro" id="IPR004367">
    <property type="entry name" value="Cyclin_C-dom"/>
</dbReference>
<dbReference type="InterPro" id="IPR014399">
    <property type="entry name" value="Cyclin_CLN"/>
</dbReference>
<dbReference type="InterPro" id="IPR006671">
    <property type="entry name" value="Cyclin_N"/>
</dbReference>
<dbReference type="InterPro" id="IPR048258">
    <property type="entry name" value="Cyclins_cyclin-box"/>
</dbReference>
<dbReference type="PANTHER" id="PTHR10177">
    <property type="entry name" value="CYCLINS"/>
    <property type="match status" value="1"/>
</dbReference>
<dbReference type="Pfam" id="PF02984">
    <property type="entry name" value="Cyclin_C"/>
    <property type="match status" value="1"/>
</dbReference>
<dbReference type="Pfam" id="PF00134">
    <property type="entry name" value="Cyclin_N"/>
    <property type="match status" value="1"/>
</dbReference>
<dbReference type="PIRSF" id="PIRSF001770">
    <property type="entry name" value="Cyclin_CLN"/>
    <property type="match status" value="1"/>
</dbReference>
<dbReference type="SMART" id="SM00385">
    <property type="entry name" value="CYCLIN"/>
    <property type="match status" value="1"/>
</dbReference>
<dbReference type="SMART" id="SM01332">
    <property type="entry name" value="Cyclin_C"/>
    <property type="match status" value="1"/>
</dbReference>
<dbReference type="SUPFAM" id="SSF47954">
    <property type="entry name" value="Cyclin-like"/>
    <property type="match status" value="2"/>
</dbReference>
<dbReference type="PROSITE" id="PS00292">
    <property type="entry name" value="CYCLINS"/>
    <property type="match status" value="1"/>
</dbReference>
<proteinExistence type="evidence at protein level"/>
<feature type="chain" id="PRO_0000413034" description="G1/S-specific cyclin CCN1">
    <location>
        <begin position="1"/>
        <end position="693"/>
    </location>
</feature>
<feature type="region of interest" description="Disordered" evidence="1">
    <location>
        <begin position="273"/>
        <end position="320"/>
    </location>
</feature>
<feature type="region of interest" description="Disordered" evidence="1">
    <location>
        <begin position="465"/>
        <end position="571"/>
    </location>
</feature>
<feature type="region of interest" description="Disordered" evidence="1">
    <location>
        <begin position="595"/>
        <end position="615"/>
    </location>
</feature>
<feature type="region of interest" description="Disordered" evidence="1">
    <location>
        <begin position="662"/>
        <end position="693"/>
    </location>
</feature>
<feature type="compositionally biased region" description="Polar residues" evidence="1">
    <location>
        <begin position="273"/>
        <end position="298"/>
    </location>
</feature>
<feature type="compositionally biased region" description="Acidic residues" evidence="1">
    <location>
        <begin position="306"/>
        <end position="320"/>
    </location>
</feature>
<feature type="compositionally biased region" description="Acidic residues" evidence="1">
    <location>
        <begin position="465"/>
        <end position="476"/>
    </location>
</feature>
<feature type="compositionally biased region" description="Polar residues" evidence="1">
    <location>
        <begin position="489"/>
        <end position="516"/>
    </location>
</feature>
<feature type="compositionally biased region" description="Polar residues" evidence="1">
    <location>
        <begin position="524"/>
        <end position="563"/>
    </location>
</feature>
<feature type="compositionally biased region" description="Low complexity" evidence="1">
    <location>
        <begin position="666"/>
        <end position="685"/>
    </location>
</feature>